<gene>
    <name type="primary">ltrA</name>
</gene>
<comment type="similarity">
    <text evidence="2">Belongs to the LysR transcriptional regulatory family.</text>
</comment>
<evidence type="ECO:0000255" key="1">
    <source>
        <dbReference type="PROSITE-ProRule" id="PRU00253"/>
    </source>
</evidence>
<evidence type="ECO:0000305" key="2"/>
<dbReference type="EMBL" id="U31464">
    <property type="protein sequence ID" value="AAC44735.1"/>
    <property type="molecule type" value="Genomic_DNA"/>
</dbReference>
<dbReference type="PIR" id="S70535">
    <property type="entry name" value="S70535"/>
</dbReference>
<dbReference type="RefSeq" id="WP_004178570.1">
    <property type="nucleotide sequence ID" value="NZ_WYAM01000022.1"/>
</dbReference>
<dbReference type="SMR" id="P52689"/>
<dbReference type="GO" id="GO:0003700">
    <property type="term" value="F:DNA-binding transcription factor activity"/>
    <property type="evidence" value="ECO:0007669"/>
    <property type="project" value="InterPro"/>
</dbReference>
<dbReference type="GO" id="GO:0043565">
    <property type="term" value="F:sequence-specific DNA binding"/>
    <property type="evidence" value="ECO:0007669"/>
    <property type="project" value="TreeGrafter"/>
</dbReference>
<dbReference type="GO" id="GO:0006351">
    <property type="term" value="P:DNA-templated transcription"/>
    <property type="evidence" value="ECO:0007669"/>
    <property type="project" value="TreeGrafter"/>
</dbReference>
<dbReference type="CDD" id="cd08422">
    <property type="entry name" value="PBP2_CrgA_like"/>
    <property type="match status" value="1"/>
</dbReference>
<dbReference type="FunFam" id="1.10.10.10:FF:000001">
    <property type="entry name" value="LysR family transcriptional regulator"/>
    <property type="match status" value="1"/>
</dbReference>
<dbReference type="Gene3D" id="3.40.190.290">
    <property type="match status" value="1"/>
</dbReference>
<dbReference type="Gene3D" id="1.10.10.10">
    <property type="entry name" value="Winged helix-like DNA-binding domain superfamily/Winged helix DNA-binding domain"/>
    <property type="match status" value="1"/>
</dbReference>
<dbReference type="InterPro" id="IPR005119">
    <property type="entry name" value="LysR_subst-bd"/>
</dbReference>
<dbReference type="InterPro" id="IPR000847">
    <property type="entry name" value="Tscrpt_reg_HTH_LysR"/>
</dbReference>
<dbReference type="InterPro" id="IPR036388">
    <property type="entry name" value="WH-like_DNA-bd_sf"/>
</dbReference>
<dbReference type="InterPro" id="IPR036390">
    <property type="entry name" value="WH_DNA-bd_sf"/>
</dbReference>
<dbReference type="PANTHER" id="PTHR30537:SF5">
    <property type="entry name" value="HTH-TYPE TRANSCRIPTIONAL ACTIVATOR TTDR-RELATED"/>
    <property type="match status" value="1"/>
</dbReference>
<dbReference type="PANTHER" id="PTHR30537">
    <property type="entry name" value="HTH-TYPE TRANSCRIPTIONAL REGULATOR"/>
    <property type="match status" value="1"/>
</dbReference>
<dbReference type="Pfam" id="PF00126">
    <property type="entry name" value="HTH_1"/>
    <property type="match status" value="1"/>
</dbReference>
<dbReference type="Pfam" id="PF03466">
    <property type="entry name" value="LysR_substrate"/>
    <property type="match status" value="1"/>
</dbReference>
<dbReference type="SUPFAM" id="SSF53850">
    <property type="entry name" value="Periplasmic binding protein-like II"/>
    <property type="match status" value="1"/>
</dbReference>
<dbReference type="SUPFAM" id="SSF46785">
    <property type="entry name" value="Winged helix' DNA-binding domain"/>
    <property type="match status" value="1"/>
</dbReference>
<dbReference type="PROSITE" id="PS50931">
    <property type="entry name" value="HTH_LYSR"/>
    <property type="match status" value="1"/>
</dbReference>
<accession>P52689</accession>
<feature type="chain" id="PRO_0000105666" description="Probable HTH-type transcriptional regulator LtrA">
    <location>
        <begin position="1"/>
        <end position="309"/>
    </location>
</feature>
<feature type="domain" description="HTH lysR-type" evidence="1">
    <location>
        <begin position="1"/>
        <end position="61"/>
    </location>
</feature>
<feature type="DNA-binding region" description="H-T-H motif" evidence="1">
    <location>
        <begin position="21"/>
        <end position="40"/>
    </location>
</feature>
<protein>
    <recommendedName>
        <fullName>Probable HTH-type transcriptional regulator LtrA</fullName>
    </recommendedName>
</protein>
<sequence>MNLNLLPDLALFVQIVDQGSFSAVARQNGITPSAVSRSVSRLEREMGCKLLQRTTRKLRLSDAGETIYQHAQQMLEAARQAMDSAGSRQTVAQGKLTLSVPKAVGRFVIHPLMMAFFHRYPQVDVCLRLEDRPLDFIDDGIDLALRITDTPSPGLHGKPLMPIRHVICATEAYLQQHGTPYTPQDLRAHSCISLGETPADARWKFRREGKTETVQTYGRYAANHTAVRLDAVRQHLGIGSLPLFTAREALANGDIVQVLPEWEFISSYSGDLWLLWAGDKHMPARMRAMIDYLSETVPALNAGSTEPAK</sequence>
<proteinExistence type="inferred from homology"/>
<keyword id="KW-0238">DNA-binding</keyword>
<keyword id="KW-0804">Transcription</keyword>
<keyword id="KW-0805">Transcription regulation</keyword>
<reference key="1">
    <citation type="journal article" date="1995" name="Mol. Microbiol.">
        <title>Regulation of anaerobic citrate metabolism in Klebsiella pneumoniae.</title>
        <authorList>
            <person name="Bott M."/>
            <person name="Meyer M."/>
            <person name="Dimroth P."/>
        </authorList>
    </citation>
    <scope>NUCLEOTIDE SEQUENCE [GENOMIC DNA]</scope>
    <source>
        <strain>ATCC 13882 / NBRC 13541 / NCTC 8172</strain>
    </source>
</reference>
<organism>
    <name type="scientific">Klebsiella pneumoniae</name>
    <dbReference type="NCBI Taxonomy" id="573"/>
    <lineage>
        <taxon>Bacteria</taxon>
        <taxon>Pseudomonadati</taxon>
        <taxon>Pseudomonadota</taxon>
        <taxon>Gammaproteobacteria</taxon>
        <taxon>Enterobacterales</taxon>
        <taxon>Enterobacteriaceae</taxon>
        <taxon>Klebsiella/Raoultella group</taxon>
        <taxon>Klebsiella</taxon>
        <taxon>Klebsiella pneumoniae complex</taxon>
    </lineage>
</organism>
<name>LTRA_KLEPN</name>